<feature type="chain" id="PRO_0000383225" description="Nucleotide-binding protein Csac_1160">
    <location>
        <begin position="1"/>
        <end position="293"/>
    </location>
</feature>
<feature type="binding site" evidence="1">
    <location>
        <begin position="11"/>
        <end position="18"/>
    </location>
    <ligand>
        <name>ATP</name>
        <dbReference type="ChEBI" id="CHEBI:30616"/>
    </ligand>
</feature>
<feature type="binding site" evidence="1">
    <location>
        <begin position="62"/>
        <end position="65"/>
    </location>
    <ligand>
        <name>GTP</name>
        <dbReference type="ChEBI" id="CHEBI:37565"/>
    </ligand>
</feature>
<reference key="1">
    <citation type="submission" date="2007-04" db="EMBL/GenBank/DDBJ databases">
        <title>Genome sequence of the thermophilic hydrogen-producing bacterium Caldicellulosiruptor saccharolyticus DSM 8903.</title>
        <authorList>
            <person name="Copeland A."/>
            <person name="Lucas S."/>
            <person name="Lapidus A."/>
            <person name="Barry K."/>
            <person name="Detter J.C."/>
            <person name="Glavina del Rio T."/>
            <person name="Hammon N."/>
            <person name="Israni S."/>
            <person name="Dalin E."/>
            <person name="Tice H."/>
            <person name="Pitluck S."/>
            <person name="Kiss H."/>
            <person name="Brettin T."/>
            <person name="Bruce D."/>
            <person name="Han C."/>
            <person name="Schmutz J."/>
            <person name="Larimer F."/>
            <person name="Land M."/>
            <person name="Hauser L."/>
            <person name="Kyrpides N."/>
            <person name="Lykidis A."/>
            <person name="van de Werken H.J.G."/>
            <person name="Verhaart M.R.A."/>
            <person name="VanFossen A.L."/>
            <person name="Lewis D.L."/>
            <person name="Nichols J.D."/>
            <person name="Goorissen H.P."/>
            <person name="van Niel E.W.J."/>
            <person name="Stams F.J.M."/>
            <person name="Willquist K.U."/>
            <person name="Ward D.E."/>
            <person name="van der Oost J."/>
            <person name="Kelly R.M."/>
            <person name="Kengen S.M.W."/>
            <person name="Richardson P."/>
        </authorList>
    </citation>
    <scope>NUCLEOTIDE SEQUENCE [LARGE SCALE GENOMIC DNA]</scope>
    <source>
        <strain>ATCC 43494 / DSM 8903 / Tp8T 6331</strain>
    </source>
</reference>
<name>Y1160_CALS8</name>
<keyword id="KW-0067">ATP-binding</keyword>
<keyword id="KW-0342">GTP-binding</keyword>
<keyword id="KW-0547">Nucleotide-binding</keyword>
<dbReference type="EMBL" id="CP000679">
    <property type="protein sequence ID" value="ABP66765.1"/>
    <property type="molecule type" value="Genomic_DNA"/>
</dbReference>
<dbReference type="SMR" id="A4XIN0"/>
<dbReference type="STRING" id="351627.Csac_1160"/>
<dbReference type="KEGG" id="csc:Csac_1160"/>
<dbReference type="eggNOG" id="COG1660">
    <property type="taxonomic scope" value="Bacteria"/>
</dbReference>
<dbReference type="HOGENOM" id="CLU_059558_0_0_9"/>
<dbReference type="Proteomes" id="UP000000256">
    <property type="component" value="Chromosome"/>
</dbReference>
<dbReference type="GO" id="GO:0005524">
    <property type="term" value="F:ATP binding"/>
    <property type="evidence" value="ECO:0007669"/>
    <property type="project" value="UniProtKB-UniRule"/>
</dbReference>
<dbReference type="GO" id="GO:0005525">
    <property type="term" value="F:GTP binding"/>
    <property type="evidence" value="ECO:0007669"/>
    <property type="project" value="UniProtKB-UniRule"/>
</dbReference>
<dbReference type="Gene3D" id="3.40.50.300">
    <property type="entry name" value="P-loop containing nucleotide triphosphate hydrolases"/>
    <property type="match status" value="1"/>
</dbReference>
<dbReference type="HAMAP" id="MF_00636">
    <property type="entry name" value="RapZ_like"/>
    <property type="match status" value="1"/>
</dbReference>
<dbReference type="InterPro" id="IPR027417">
    <property type="entry name" value="P-loop_NTPase"/>
</dbReference>
<dbReference type="InterPro" id="IPR005337">
    <property type="entry name" value="RapZ-like"/>
</dbReference>
<dbReference type="InterPro" id="IPR053930">
    <property type="entry name" value="RapZ-like_N"/>
</dbReference>
<dbReference type="InterPro" id="IPR053931">
    <property type="entry name" value="RapZ_C"/>
</dbReference>
<dbReference type="NCBIfam" id="NF003828">
    <property type="entry name" value="PRK05416.1"/>
    <property type="match status" value="1"/>
</dbReference>
<dbReference type="PANTHER" id="PTHR30448">
    <property type="entry name" value="RNASE ADAPTER PROTEIN RAPZ"/>
    <property type="match status" value="1"/>
</dbReference>
<dbReference type="PANTHER" id="PTHR30448:SF0">
    <property type="entry name" value="RNASE ADAPTER PROTEIN RAPZ"/>
    <property type="match status" value="1"/>
</dbReference>
<dbReference type="Pfam" id="PF22740">
    <property type="entry name" value="PapZ_C"/>
    <property type="match status" value="1"/>
</dbReference>
<dbReference type="Pfam" id="PF03668">
    <property type="entry name" value="RapZ-like_N"/>
    <property type="match status" value="1"/>
</dbReference>
<dbReference type="PIRSF" id="PIRSF005052">
    <property type="entry name" value="P-loopkin"/>
    <property type="match status" value="1"/>
</dbReference>
<dbReference type="SUPFAM" id="SSF52540">
    <property type="entry name" value="P-loop containing nucleoside triphosphate hydrolases"/>
    <property type="match status" value="1"/>
</dbReference>
<sequence>MILLETVIVTGMSGAGKSLAIRAFEDMGFFCIDNLPPQFLPKIAELASASNDKISRIAAVIDIRGGELFDDFKDVLNDLKKGTYNFKVLFLDAHDNVLVQRYKETRRKHPLSFESDGSILEAIQKEREKLEDIKRYADFIIDTSTLSPRDLKEKLFEIFSAQRSRETMLITVMSFGFKYGLPLDADLVFDVRFIPNPFYVEELKHKTGKEKEVKEYVLKWDVTKEFLKKLFDLILFLIPNYAEEGKAQLVIAIGCTGGKHRSVTIAEELFELIKNNGYKASIFHRDIEKDIKG</sequence>
<organism>
    <name type="scientific">Caldicellulosiruptor saccharolyticus (strain ATCC 43494 / DSM 8903 / Tp8T 6331)</name>
    <dbReference type="NCBI Taxonomy" id="351627"/>
    <lineage>
        <taxon>Bacteria</taxon>
        <taxon>Bacillati</taxon>
        <taxon>Bacillota</taxon>
        <taxon>Bacillota incertae sedis</taxon>
        <taxon>Caldicellulosiruptorales</taxon>
        <taxon>Caldicellulosiruptoraceae</taxon>
        <taxon>Caldicellulosiruptor</taxon>
    </lineage>
</organism>
<comment type="function">
    <text evidence="1">Displays ATPase and GTPase activities.</text>
</comment>
<comment type="similarity">
    <text evidence="1">Belongs to the RapZ-like family.</text>
</comment>
<protein>
    <recommendedName>
        <fullName evidence="1">Nucleotide-binding protein Csac_1160</fullName>
    </recommendedName>
</protein>
<gene>
    <name type="ordered locus">Csac_1160</name>
</gene>
<accession>A4XIN0</accession>
<evidence type="ECO:0000255" key="1">
    <source>
        <dbReference type="HAMAP-Rule" id="MF_00636"/>
    </source>
</evidence>
<proteinExistence type="inferred from homology"/>